<proteinExistence type="evidence at protein level"/>
<accession>Q00888</accession>
<accession>E7EX79</accession>
<accession>Q13047</accession>
<accession>Q13048</accession>
<accession>Q15234</accession>
<accession>Q15240</accession>
<accession>Q9UQ76</accession>
<name>PSG4_HUMAN</name>
<reference key="1">
    <citation type="journal article" date="1990" name="Biochem. Biophys. Res. Commun.">
        <title>The human pregnancy-specific glycoprotein genes are tightly linked on the long arm of chromosome 19 and are coordinately expressed.</title>
        <authorList>
            <person name="Thompson J."/>
            <person name="Koumari R."/>
            <person name="Wagner K."/>
            <person name="Barnert S."/>
            <person name="Schleussner C."/>
            <person name="Schrewe H."/>
            <person name="Zimmermann W."/>
            <person name="Mueller G."/>
            <person name="Schempp W."/>
            <person name="Zaninetta D."/>
            <person name="Ammaturo D."/>
            <person name="Hardman N."/>
        </authorList>
    </citation>
    <scope>NUCLEOTIDE SEQUENCE [GENOMIC DNA] (ISOFORM 1)</scope>
    <scope>VARIANT HIS-11</scope>
</reference>
<reference key="2">
    <citation type="journal article" date="1990" name="Biochem. Biophys. Res. Commun.">
        <authorList>
            <person name="Thompson J."/>
            <person name="Koumari R."/>
            <person name="Wagner K."/>
            <person name="Barnert S."/>
            <person name="Schleussner C."/>
            <person name="Schrewe H."/>
            <person name="Zimmermann W."/>
            <person name="Mueller G."/>
            <person name="Schempp W."/>
            <person name="Zaninetta D."/>
            <person name="Ammaturo D."/>
            <person name="Hardman N."/>
        </authorList>
    </citation>
    <scope>ERRATUM OF PUBMED:1690992</scope>
</reference>
<reference key="3">
    <citation type="journal article" date="1990" name="Biochemistry">
        <title>Characterization of two new members of the pregnancy-specific beta 1-glycoprotein family from the myeloid cell line KG-1 and suggestion of two distinct classes of transcription unit.</title>
        <authorList>
            <person name="Barnett T.R."/>
            <person name="Pickle W. II"/>
            <person name="Elting J.J."/>
        </authorList>
    </citation>
    <scope>NUCLEOTIDE SEQUENCE [MRNA] (ISOFORM 1)</scope>
    <scope>VARIANTS HIS-11; VAL-75 AND GLU-267</scope>
    <source>
        <tissue>Bone marrow</tissue>
    </source>
</reference>
<reference key="4">
    <citation type="journal article" date="1991" name="Mol. Cell. Biochem.">
        <title>Characterization of new members of the pregnancy-specific beta 1-glycoprotein family.</title>
        <authorList>
            <person name="Chan W.Y."/>
            <person name="Zheng Q.X."/>
            <person name="McMahon J."/>
            <person name="Tease L.A."/>
        </authorList>
    </citation>
    <scope>NUCLEOTIDE SEQUENCE [MRNA] (ISOFORM 1)</scope>
    <scope>VARIANTS HIS-11; VAL-75 AND GLU-267</scope>
</reference>
<reference key="5">
    <citation type="journal article" date="1995" name="Biochem. Biophys. Res. Commun.">
        <title>Characterization of cDNA encoding novel pregnancy-specific glycoprotein variants.</title>
        <authorList>
            <person name="Teglund S."/>
            <person name="Zhou G.Q."/>
            <person name="Hammarstroem S."/>
        </authorList>
    </citation>
    <scope>NUCLEOTIDE SEQUENCE [MRNA] (ISOFORMS 1 AND 2)</scope>
    <scope>VARIANTS HIS-11; VAL-75 AND GLU-267</scope>
    <source>
        <tissue>Fetal liver</tissue>
    </source>
</reference>
<reference key="6">
    <citation type="journal article" date="2004" name="Nature">
        <title>The DNA sequence and biology of human chromosome 19.</title>
        <authorList>
            <person name="Grimwood J."/>
            <person name="Gordon L.A."/>
            <person name="Olsen A.S."/>
            <person name="Terry A."/>
            <person name="Schmutz J."/>
            <person name="Lamerdin J.E."/>
            <person name="Hellsten U."/>
            <person name="Goodstein D."/>
            <person name="Couronne O."/>
            <person name="Tran-Gyamfi M."/>
            <person name="Aerts A."/>
            <person name="Altherr M."/>
            <person name="Ashworth L."/>
            <person name="Bajorek E."/>
            <person name="Black S."/>
            <person name="Branscomb E."/>
            <person name="Caenepeel S."/>
            <person name="Carrano A.V."/>
            <person name="Caoile C."/>
            <person name="Chan Y.M."/>
            <person name="Christensen M."/>
            <person name="Cleland C.A."/>
            <person name="Copeland A."/>
            <person name="Dalin E."/>
            <person name="Dehal P."/>
            <person name="Denys M."/>
            <person name="Detter J.C."/>
            <person name="Escobar J."/>
            <person name="Flowers D."/>
            <person name="Fotopulos D."/>
            <person name="Garcia C."/>
            <person name="Georgescu A.M."/>
            <person name="Glavina T."/>
            <person name="Gomez M."/>
            <person name="Gonzales E."/>
            <person name="Groza M."/>
            <person name="Hammon N."/>
            <person name="Hawkins T."/>
            <person name="Haydu L."/>
            <person name="Ho I."/>
            <person name="Huang W."/>
            <person name="Israni S."/>
            <person name="Jett J."/>
            <person name="Kadner K."/>
            <person name="Kimball H."/>
            <person name="Kobayashi A."/>
            <person name="Larionov V."/>
            <person name="Leem S.-H."/>
            <person name="Lopez F."/>
            <person name="Lou Y."/>
            <person name="Lowry S."/>
            <person name="Malfatti S."/>
            <person name="Martinez D."/>
            <person name="McCready P.M."/>
            <person name="Medina C."/>
            <person name="Morgan J."/>
            <person name="Nelson K."/>
            <person name="Nolan M."/>
            <person name="Ovcharenko I."/>
            <person name="Pitluck S."/>
            <person name="Pollard M."/>
            <person name="Popkie A.P."/>
            <person name="Predki P."/>
            <person name="Quan G."/>
            <person name="Ramirez L."/>
            <person name="Rash S."/>
            <person name="Retterer J."/>
            <person name="Rodriguez A."/>
            <person name="Rogers S."/>
            <person name="Salamov A."/>
            <person name="Salazar A."/>
            <person name="She X."/>
            <person name="Smith D."/>
            <person name="Slezak T."/>
            <person name="Solovyev V."/>
            <person name="Thayer N."/>
            <person name="Tice H."/>
            <person name="Tsai M."/>
            <person name="Ustaszewska A."/>
            <person name="Vo N."/>
            <person name="Wagner M."/>
            <person name="Wheeler J."/>
            <person name="Wu K."/>
            <person name="Xie G."/>
            <person name="Yang J."/>
            <person name="Dubchak I."/>
            <person name="Furey T.S."/>
            <person name="DeJong P."/>
            <person name="Dickson M."/>
            <person name="Gordon D."/>
            <person name="Eichler E.E."/>
            <person name="Pennacchio L.A."/>
            <person name="Richardson P."/>
            <person name="Stubbs L."/>
            <person name="Rokhsar D.S."/>
            <person name="Myers R.M."/>
            <person name="Rubin E.M."/>
            <person name="Lucas S.M."/>
        </authorList>
    </citation>
    <scope>NUCLEOTIDE SEQUENCE [LARGE SCALE GENOMIC DNA]</scope>
</reference>
<reference key="7">
    <citation type="journal article" date="1989" name="Biochem. Biophys. Res. Commun.">
        <title>cDNA cloning demonstrates the expression of pregnancy-specific glycoprotein genes, a subgroup of the carcinoembryonic antigen gene family, in fetal liver.</title>
        <authorList>
            <person name="Zimmermann W.A."/>
            <person name="Weiss M."/>
            <person name="Thompson J.A."/>
        </authorList>
    </citation>
    <scope>NUCLEOTIDE SEQUENCE [MRNA] OF 210-419 (ISOFORM 1)</scope>
    <scope>VARIANT GLU-267</scope>
    <source>
        <tissue>Fetal liver</tissue>
    </source>
</reference>
<reference key="8">
    <citation type="journal article" date="1988" name="DNA">
        <title>Characterization of cDNA encoding human pregnancy-specific beta 1-glycoprotein from placenta and extraplacental tissues and their comparison with carcinoembryonic antigen.</title>
        <authorList>
            <person name="Chan W.-Y."/>
            <person name="Borjigin J."/>
            <person name="Zheng Q.-X."/>
            <person name="Shupert W.L."/>
        </authorList>
    </citation>
    <scope>NUCLEOTIDE SEQUENCE [MRNA] OF 1-143</scope>
</reference>
<reference key="9">
    <citation type="submission" date="1998-11" db="EMBL/GenBank/DDBJ databases">
        <title>Characterization of upstream promotor region, exon 1 and exon 2 of the PSG gene family.</title>
        <authorList>
            <person name="Fraengsmyr L."/>
            <person name="Teglund S."/>
            <person name="Israelsson A."/>
            <person name="Hammarstroem S."/>
        </authorList>
    </citation>
    <scope>NUCLEOTIDE SEQUENCE [GENOMIC DNA] OF 1-43</scope>
</reference>
<evidence type="ECO:0000255" key="1"/>
<evidence type="ECO:0000269" key="2">
    <source>
    </source>
</evidence>
<evidence type="ECO:0000269" key="3">
    <source>
    </source>
</evidence>
<evidence type="ECO:0000269" key="4">
    <source>
    </source>
</evidence>
<evidence type="ECO:0000269" key="5">
    <source>
    </source>
</evidence>
<evidence type="ECO:0000269" key="6">
    <source>
    </source>
</evidence>
<evidence type="ECO:0000303" key="7">
    <source>
    </source>
</evidence>
<evidence type="ECO:0000305" key="8"/>
<protein>
    <recommendedName>
        <fullName>Pregnancy-specific beta-1-glycoprotein 4</fullName>
        <shortName>PS-beta-G-4</shortName>
        <shortName>PSBG-4</shortName>
        <shortName>Pregnancy-specific glycoprotein 4</shortName>
    </recommendedName>
    <alternativeName>
        <fullName>Pregnancy-specific beta-1-glycoprotein 9</fullName>
        <shortName>PS-beta-G-9</shortName>
        <shortName>PSBG-9</shortName>
        <shortName>Pregnancy-specific glycoprotein 9</shortName>
    </alternativeName>
</protein>
<organism>
    <name type="scientific">Homo sapiens</name>
    <name type="common">Human</name>
    <dbReference type="NCBI Taxonomy" id="9606"/>
    <lineage>
        <taxon>Eukaryota</taxon>
        <taxon>Metazoa</taxon>
        <taxon>Chordata</taxon>
        <taxon>Craniata</taxon>
        <taxon>Vertebrata</taxon>
        <taxon>Euteleostomi</taxon>
        <taxon>Mammalia</taxon>
        <taxon>Eutheria</taxon>
        <taxon>Euarchontoglires</taxon>
        <taxon>Primates</taxon>
        <taxon>Haplorrhini</taxon>
        <taxon>Catarrhini</taxon>
        <taxon>Hominidae</taxon>
        <taxon>Homo</taxon>
    </lineage>
</organism>
<dbReference type="EMBL" id="M32622">
    <property type="status" value="NOT_ANNOTATED_CDS"/>
    <property type="molecule type" value="Genomic_DNA"/>
</dbReference>
<dbReference type="EMBL" id="M32623">
    <property type="status" value="NOT_ANNOTATED_CDS"/>
    <property type="molecule type" value="Genomic_DNA"/>
</dbReference>
<dbReference type="EMBL" id="M32624">
    <property type="status" value="NOT_ANNOTATED_CDS"/>
    <property type="molecule type" value="Genomic_DNA"/>
</dbReference>
<dbReference type="EMBL" id="M32625">
    <property type="status" value="NOT_ANNOTATED_CDS"/>
    <property type="molecule type" value="Genomic_DNA"/>
</dbReference>
<dbReference type="EMBL" id="M32626">
    <property type="status" value="NOT_ANNOTATED_CDS"/>
    <property type="molecule type" value="Genomic_DNA"/>
</dbReference>
<dbReference type="EMBL" id="M32627">
    <property type="status" value="NOT_ANNOTATED_CDS"/>
    <property type="molecule type" value="Genomic_DNA"/>
</dbReference>
<dbReference type="EMBL" id="X17097">
    <property type="protein sequence ID" value="CAA34956.1"/>
    <property type="molecule type" value="mRNA"/>
</dbReference>
<dbReference type="EMBL" id="M94891">
    <property type="protein sequence ID" value="AAA60195.1"/>
    <property type="molecule type" value="mRNA"/>
</dbReference>
<dbReference type="EMBL" id="U18468">
    <property type="protein sequence ID" value="AAA75294.1"/>
    <property type="molecule type" value="mRNA"/>
</dbReference>
<dbReference type="EMBL" id="U18469">
    <property type="protein sequence ID" value="AAA75295.1"/>
    <property type="molecule type" value="mRNA"/>
</dbReference>
<dbReference type="EMBL" id="AC005392">
    <property type="status" value="NOT_ANNOTATED_CDS"/>
    <property type="molecule type" value="Genomic_DNA"/>
</dbReference>
<dbReference type="EMBL" id="M33665">
    <property type="protein sequence ID" value="AAA60208.1"/>
    <property type="status" value="ALT_SEQ"/>
    <property type="molecule type" value="mRNA"/>
</dbReference>
<dbReference type="EMBL" id="AH007625">
    <property type="protein sequence ID" value="AAD28499.1"/>
    <property type="molecule type" value="Genomic_DNA"/>
</dbReference>
<dbReference type="CCDS" id="CCDS33039.1">
    <molecule id="Q00888-2"/>
</dbReference>
<dbReference type="CCDS" id="CCDS46093.1">
    <molecule id="Q00888-1"/>
</dbReference>
<dbReference type="CCDS" id="CCDS62695.1">
    <molecule id="Q00888-3"/>
</dbReference>
<dbReference type="PIR" id="A36109">
    <property type="entry name" value="A36109"/>
</dbReference>
<dbReference type="PIR" id="B54312">
    <property type="entry name" value="B54312"/>
</dbReference>
<dbReference type="PIR" id="C33258">
    <property type="entry name" value="C33258"/>
</dbReference>
<dbReference type="PIR" id="JC4124">
    <property type="entry name" value="JC4124"/>
</dbReference>
<dbReference type="RefSeq" id="NP_001263424.1">
    <molecule id="Q00888-3"/>
    <property type="nucleotide sequence ID" value="NM_001276495.2"/>
</dbReference>
<dbReference type="RefSeq" id="NP_002771.2">
    <molecule id="Q00888-1"/>
    <property type="nucleotide sequence ID" value="NM_002780.4"/>
</dbReference>
<dbReference type="RefSeq" id="NP_998798.1">
    <molecule id="Q00888-2"/>
    <property type="nucleotide sequence ID" value="NM_213633.3"/>
</dbReference>
<dbReference type="SMR" id="Q00888"/>
<dbReference type="BioGRID" id="111647">
    <property type="interactions" value="7"/>
</dbReference>
<dbReference type="FunCoup" id="Q00888">
    <property type="interactions" value="67"/>
</dbReference>
<dbReference type="IntAct" id="Q00888">
    <property type="interactions" value="6"/>
</dbReference>
<dbReference type="STRING" id="9606.ENSP00000384770"/>
<dbReference type="GlyCosmos" id="Q00888">
    <property type="glycosylation" value="6 sites, No reported glycans"/>
</dbReference>
<dbReference type="GlyGen" id="Q00888">
    <property type="glycosylation" value="7 sites, 1 N-linked glycan (2 sites)"/>
</dbReference>
<dbReference type="iPTMnet" id="Q00888"/>
<dbReference type="PhosphoSitePlus" id="Q00888"/>
<dbReference type="BioMuta" id="PSG4"/>
<dbReference type="DMDM" id="313104197"/>
<dbReference type="jPOST" id="Q00888"/>
<dbReference type="MassIVE" id="Q00888"/>
<dbReference type="PaxDb" id="9606-ENSP00000384770"/>
<dbReference type="PeptideAtlas" id="Q00888"/>
<dbReference type="ProteomicsDB" id="19001"/>
<dbReference type="ProteomicsDB" id="57880">
    <molecule id="Q00888-1"/>
</dbReference>
<dbReference type="ProteomicsDB" id="57881">
    <molecule id="Q00888-2"/>
</dbReference>
<dbReference type="Antibodypedia" id="35053">
    <property type="antibodies" value="84 antibodies from 20 providers"/>
</dbReference>
<dbReference type="DNASU" id="5672"/>
<dbReference type="Ensembl" id="ENST00000244295.13">
    <molecule id="Q00888-2"/>
    <property type="protein sequence ID" value="ENSP00000244295.8"/>
    <property type="gene ID" value="ENSG00000243137.8"/>
</dbReference>
<dbReference type="Ensembl" id="ENST00000405312.8">
    <molecule id="Q00888-1"/>
    <property type="protein sequence ID" value="ENSP00000384770.3"/>
    <property type="gene ID" value="ENSG00000243137.8"/>
</dbReference>
<dbReference type="Ensembl" id="ENST00000433626.6">
    <molecule id="Q00888-3"/>
    <property type="protein sequence ID" value="ENSP00000387864.2"/>
    <property type="gene ID" value="ENSG00000243137.8"/>
</dbReference>
<dbReference type="GeneID" id="5672"/>
<dbReference type="KEGG" id="hsa:5672"/>
<dbReference type="MANE-Select" id="ENST00000405312.8">
    <property type="protein sequence ID" value="ENSP00000384770.3"/>
    <property type="RefSeq nucleotide sequence ID" value="NM_002780.5"/>
    <property type="RefSeq protein sequence ID" value="NP_002771.2"/>
</dbReference>
<dbReference type="UCSC" id="uc002ovy.4">
    <molecule id="Q00888-1"/>
    <property type="organism name" value="human"/>
</dbReference>
<dbReference type="AGR" id="HGNC:9521"/>
<dbReference type="CTD" id="5672"/>
<dbReference type="DisGeNET" id="5672"/>
<dbReference type="GeneCards" id="PSG4"/>
<dbReference type="HGNC" id="HGNC:9521">
    <property type="gene designation" value="PSG4"/>
</dbReference>
<dbReference type="HPA" id="ENSG00000243137">
    <property type="expression patterns" value="Group enriched (parathyroid gland, placenta)"/>
</dbReference>
<dbReference type="MIM" id="176393">
    <property type="type" value="gene"/>
</dbReference>
<dbReference type="neXtProt" id="NX_Q00888"/>
<dbReference type="OpenTargets" id="ENSG00000243137"/>
<dbReference type="PharmGKB" id="PA33866"/>
<dbReference type="VEuPathDB" id="HostDB:ENSG00000243137"/>
<dbReference type="eggNOG" id="ENOG502RXPD">
    <property type="taxonomic scope" value="Eukaryota"/>
</dbReference>
<dbReference type="GeneTree" id="ENSGT01100000263479"/>
<dbReference type="InParanoid" id="Q00888"/>
<dbReference type="OMA" id="LEIWIMG"/>
<dbReference type="OrthoDB" id="9479347at2759"/>
<dbReference type="PAN-GO" id="Q00888">
    <property type="GO annotations" value="5 GO annotations based on evolutionary models"/>
</dbReference>
<dbReference type="PhylomeDB" id="Q00888"/>
<dbReference type="TreeFam" id="TF336859"/>
<dbReference type="PathwayCommons" id="Q00888"/>
<dbReference type="Reactome" id="R-HSA-202733">
    <property type="pathway name" value="Cell surface interactions at the vascular wall"/>
</dbReference>
<dbReference type="SignaLink" id="Q00888"/>
<dbReference type="BioGRID-ORCS" id="5672">
    <property type="hits" value="20 hits in 1091 CRISPR screens"/>
</dbReference>
<dbReference type="ChiTaRS" id="PSG4">
    <property type="organism name" value="human"/>
</dbReference>
<dbReference type="GeneWiki" id="PSG4"/>
<dbReference type="GenomeRNAi" id="5672"/>
<dbReference type="Pharos" id="Q00888">
    <property type="development level" value="Tbio"/>
</dbReference>
<dbReference type="PRO" id="PR:Q00888"/>
<dbReference type="Proteomes" id="UP000005640">
    <property type="component" value="Chromosome 19"/>
</dbReference>
<dbReference type="RNAct" id="Q00888">
    <property type="molecule type" value="protein"/>
</dbReference>
<dbReference type="Bgee" id="ENSG00000243137">
    <property type="expression patterns" value="Expressed in placenta and 93 other cell types or tissues"/>
</dbReference>
<dbReference type="ExpressionAtlas" id="Q00888">
    <property type="expression patterns" value="baseline and differential"/>
</dbReference>
<dbReference type="GO" id="GO:0005576">
    <property type="term" value="C:extracellular region"/>
    <property type="evidence" value="ECO:0007669"/>
    <property type="project" value="UniProtKB-SubCell"/>
</dbReference>
<dbReference type="GO" id="GO:0007565">
    <property type="term" value="P:female pregnancy"/>
    <property type="evidence" value="ECO:0000304"/>
    <property type="project" value="UniProtKB"/>
</dbReference>
<dbReference type="CDD" id="cd20948">
    <property type="entry name" value="IgC2_CEACAM5-like"/>
    <property type="match status" value="1"/>
</dbReference>
<dbReference type="CDD" id="cd05740">
    <property type="entry name" value="IgI_hCEACAM_2_4_6_like"/>
    <property type="match status" value="2"/>
</dbReference>
<dbReference type="CDD" id="cd05774">
    <property type="entry name" value="IgV_CEACAM_D1"/>
    <property type="match status" value="1"/>
</dbReference>
<dbReference type="FunFam" id="2.60.40.10:FF:000340">
    <property type="entry name" value="Carcinoembryonic antigen-related cell adhesion molecule 1"/>
    <property type="match status" value="1"/>
</dbReference>
<dbReference type="FunFam" id="2.60.40.10:FF:000517">
    <property type="entry name" value="Carcinoembryonic antigen-related cell adhesion molecule 1"/>
    <property type="match status" value="1"/>
</dbReference>
<dbReference type="FunFam" id="2.60.40.10:FF:000244">
    <property type="entry name" value="carcinoembryonic antigen-related cell adhesion molecule 16"/>
    <property type="match status" value="2"/>
</dbReference>
<dbReference type="Gene3D" id="2.60.40.10">
    <property type="entry name" value="Immunoglobulins"/>
    <property type="match status" value="4"/>
</dbReference>
<dbReference type="InterPro" id="IPR050831">
    <property type="entry name" value="CEA_cell_adhesion"/>
</dbReference>
<dbReference type="InterPro" id="IPR007110">
    <property type="entry name" value="Ig-like_dom"/>
</dbReference>
<dbReference type="InterPro" id="IPR036179">
    <property type="entry name" value="Ig-like_dom_sf"/>
</dbReference>
<dbReference type="InterPro" id="IPR013783">
    <property type="entry name" value="Ig-like_fold"/>
</dbReference>
<dbReference type="InterPro" id="IPR003599">
    <property type="entry name" value="Ig_sub"/>
</dbReference>
<dbReference type="InterPro" id="IPR003598">
    <property type="entry name" value="Ig_sub2"/>
</dbReference>
<dbReference type="InterPro" id="IPR013106">
    <property type="entry name" value="Ig_V-set"/>
</dbReference>
<dbReference type="PANTHER" id="PTHR44427">
    <property type="entry name" value="CARCINOEMBRYONIC ANTIGEN-RELATED CELL ADHESION MOLECULE 19"/>
    <property type="match status" value="1"/>
</dbReference>
<dbReference type="PANTHER" id="PTHR44427:SF13">
    <property type="entry name" value="PREGNANCY-SPECIFIC BETA-1-GLYCOPROTEIN 4-RELATED"/>
    <property type="match status" value="1"/>
</dbReference>
<dbReference type="Pfam" id="PF13895">
    <property type="entry name" value="Ig_2"/>
    <property type="match status" value="1"/>
</dbReference>
<dbReference type="Pfam" id="PF13927">
    <property type="entry name" value="Ig_3"/>
    <property type="match status" value="2"/>
</dbReference>
<dbReference type="Pfam" id="PF07686">
    <property type="entry name" value="V-set"/>
    <property type="match status" value="1"/>
</dbReference>
<dbReference type="SMART" id="SM00409">
    <property type="entry name" value="IG"/>
    <property type="match status" value="4"/>
</dbReference>
<dbReference type="SMART" id="SM00408">
    <property type="entry name" value="IGc2"/>
    <property type="match status" value="3"/>
</dbReference>
<dbReference type="SUPFAM" id="SSF48726">
    <property type="entry name" value="Immunoglobulin"/>
    <property type="match status" value="4"/>
</dbReference>
<dbReference type="PROSITE" id="PS50835">
    <property type="entry name" value="IG_LIKE"/>
    <property type="match status" value="3"/>
</dbReference>
<keyword id="KW-0025">Alternative splicing</keyword>
<keyword id="KW-1015">Disulfide bond</keyword>
<keyword id="KW-0325">Glycoprotein</keyword>
<keyword id="KW-0393">Immunoglobulin domain</keyword>
<keyword id="KW-1267">Proteomics identification</keyword>
<keyword id="KW-1185">Reference proteome</keyword>
<keyword id="KW-0677">Repeat</keyword>
<keyword id="KW-0964">Secreted</keyword>
<keyword id="KW-0732">Signal</keyword>
<comment type="subcellular location">
    <subcellularLocation>
        <location evidence="8">Secreted</location>
    </subcellularLocation>
</comment>
<comment type="alternative products">
    <event type="alternative splicing"/>
    <isoform>
        <id>Q00888-1</id>
        <name>1</name>
        <sequence type="displayed"/>
    </isoform>
    <isoform>
        <id>Q00888-2</id>
        <name>2</name>
        <sequence type="described" ref="VSP_007875 VSP_040131"/>
    </isoform>
    <isoform>
        <id>Q00888-3</id>
        <name>3</name>
        <sequence type="described" ref="VSP_055025"/>
    </isoform>
</comment>
<comment type="developmental stage">
    <text>PSBG are produced in high quantity during pregnancy.</text>
</comment>
<comment type="similarity">
    <text evidence="8">Belongs to the immunoglobulin superfamily. CEA family.</text>
</comment>
<comment type="sequence caution" evidence="8">
    <conflict type="miscellaneous discrepancy">
        <sequence resource="EMBL-CDS" id="AAA60208"/>
    </conflict>
    <text>Contaminating sequence. Sequence of unknown origin in the N-terminal part.</text>
</comment>
<comment type="sequence caution" evidence="8">
    <conflict type="erroneous gene model prediction">
        <sequence resource="EMBL" id="M32625"/>
    </conflict>
</comment>
<feature type="signal peptide" evidence="1">
    <location>
        <begin position="1"/>
        <end position="34"/>
    </location>
</feature>
<feature type="chain" id="PRO_0000014911" description="Pregnancy-specific beta-1-glycoprotein 4">
    <location>
        <begin position="35"/>
        <end position="419"/>
    </location>
</feature>
<feature type="domain" description="Ig-like V-type">
    <location>
        <begin position="35"/>
        <end position="144"/>
    </location>
</feature>
<feature type="domain" description="Ig-like C2-type 1">
    <location>
        <begin position="147"/>
        <end position="234"/>
    </location>
</feature>
<feature type="domain" description="Ig-like C2-type 2">
    <location>
        <begin position="237"/>
        <end position="327"/>
    </location>
</feature>
<feature type="domain" description="Ig-like C2-type 3">
    <location>
        <begin position="332"/>
        <end position="410"/>
    </location>
</feature>
<feature type="glycosylation site" description="N-linked (GlcNAc...) asparagine" evidence="1">
    <location>
        <position position="104"/>
    </location>
</feature>
<feature type="glycosylation site" description="N-linked (GlcNAc...) asparagine" evidence="1">
    <location>
        <position position="111"/>
    </location>
</feature>
<feature type="glycosylation site" description="N-linked (GlcNAc...) asparagine" evidence="1">
    <location>
        <position position="199"/>
    </location>
</feature>
<feature type="glycosylation site" description="N-linked (GlcNAc...) asparagine" evidence="1">
    <location>
        <position position="268"/>
    </location>
</feature>
<feature type="glycosylation site" description="N-linked (GlcNAc...) asparagine" evidence="1">
    <location>
        <position position="299"/>
    </location>
</feature>
<feature type="glycosylation site" description="N-linked (GlcNAc...) asparagine" evidence="1">
    <location>
        <position position="303"/>
    </location>
</feature>
<feature type="disulfide bond" evidence="8">
    <location>
        <begin position="169"/>
        <end position="217"/>
    </location>
</feature>
<feature type="disulfide bond" evidence="8">
    <location>
        <begin position="262"/>
        <end position="310"/>
    </location>
</feature>
<feature type="disulfide bond" evidence="8">
    <location>
        <begin position="354"/>
        <end position="394"/>
    </location>
</feature>
<feature type="splice variant" id="VSP_055025" description="In isoform 3." evidence="8">
    <location>
        <begin position="144"/>
        <end position="236"/>
    </location>
</feature>
<feature type="splice variant" id="VSP_007875" description="In isoform 2." evidence="7">
    <location>
        <begin position="237"/>
        <end position="329"/>
    </location>
</feature>
<feature type="splice variant" id="VSP_040131" description="In isoform 2." evidence="7">
    <original>Y</original>
    <variation>H</variation>
    <location>
        <position position="330"/>
    </location>
</feature>
<feature type="sequence variant" id="VAR_060362" description="In dbSNP:rs11883278." evidence="2 3 4 6">
    <original>Q</original>
    <variation>H</variation>
    <location>
        <position position="11"/>
    </location>
</feature>
<feature type="sequence variant" id="VAR_016040" description="In dbSNP:rs3170216." evidence="3 4 6">
    <original>L</original>
    <variation>V</variation>
    <location>
        <position position="75"/>
    </location>
</feature>
<feature type="sequence variant" id="VAR_060363" description="In dbSNP:rs73548061.">
    <original>S</original>
    <variation>R</variation>
    <location>
        <position position="177"/>
    </location>
</feature>
<feature type="sequence variant" id="VAR_056073" description="In dbSNP:rs3859474.">
    <original>S</original>
    <variation>P</variation>
    <location>
        <position position="240"/>
    </location>
</feature>
<feature type="sequence variant" id="VAR_060364" description="In dbSNP:rs1058718." evidence="3 4 5 6">
    <original>K</original>
    <variation>E</variation>
    <location>
        <position position="267"/>
    </location>
</feature>
<feature type="sequence variant" id="VAR_056074" description="In dbSNP:rs2355442.">
    <original>V</original>
    <variation>A</variation>
    <location>
        <position position="286"/>
    </location>
</feature>
<feature type="sequence conflict" description="In Ref. 1; M32622, 3; CAA34956, 4; AAA60195 and 5; AAA75294/AAA75295." evidence="8" ref="1 3 4 5">
    <original>R</original>
    <variation>L</variation>
    <location>
        <position position="12"/>
    </location>
</feature>
<feature type="sequence conflict" description="In Ref. 4; AAA60195." evidence="8" ref="4">
    <original>V</original>
    <variation>L</variation>
    <location>
        <position position="18"/>
    </location>
</feature>
<feature type="sequence conflict" description="In Ref. 1; M32624." evidence="8" ref="1">
    <original>A</original>
    <variation>P</variation>
    <location>
        <position position="175"/>
    </location>
</feature>
<feature type="sequence conflict" description="In Ref. 3; CAA34956." evidence="8" ref="3">
    <original>L</original>
    <variation>F</variation>
    <location>
        <position position="352"/>
    </location>
</feature>
<feature type="sequence conflict" description="In Ref. 3; CAA34956." evidence="8" ref="3">
    <original>A</original>
    <variation>G</variation>
    <location>
        <position position="356"/>
    </location>
</feature>
<gene>
    <name type="primary">PSG4</name>
    <name type="synonym">CGM4</name>
    <name type="synonym">PSG9</name>
</gene>
<sequence length="419" mass="47113">MGPLSAPPCTQRITWKGVLLTASLLNFWNPPTTAQVTIEAQPPKVSEGKDVLLLVHNLPQNLAGYIWYKGQMTYLYHYITSYVVDGQRIIYGPAYSGRERVYSNASLLIQNVTQEDAGSYTLHIIKRRDGTGGVTGHFTFTLHLETPKPSISSSNLNPREAMEAVILTCDPATPAASYQWWMNGQSLPMTHRLQLSKTNRTLFIFGVTKYIAGPYECEIRNPVSASRSDPVTLNLLPKLSKPYITINNLNPRENKDVLTFTCEPKSKNYTYIWWLNGQSLPVSPRVKRPIENRILILPNVTRNETGPYQCEIRDRYGGIRSDPVTLNVLYGPDLPSIYPSFTYYRSGENLYLSCFAESNPRAQYSWTINGKFQLSGQKLSIPQITTKHSGLYACSVRNSATGKESSKSITVKVSDWILP</sequence>